<organism>
    <name type="scientific">Hepatitis C virus (isolate HCT27)</name>
    <name type="common">HCV</name>
    <dbReference type="NCBI Taxonomy" id="11109"/>
    <lineage>
        <taxon>Viruses</taxon>
        <taxon>Riboviria</taxon>
        <taxon>Orthornavirae</taxon>
        <taxon>Kitrinoviricota</taxon>
        <taxon>Flasuviricetes</taxon>
        <taxon>Amarillovirales</taxon>
        <taxon>Flaviviridae</taxon>
        <taxon>Hepacivirus</taxon>
        <taxon>Hepacivirus hominis</taxon>
    </lineage>
</organism>
<feature type="chain" id="PRO_0000450905" description="Genome polyprotein">
    <location>
        <begin position="1" status="less than"/>
        <end position="309" status="greater than"/>
    </location>
</feature>
<feature type="chain" id="PRO_0000037583" description="Core protein precursor">
    <location>
        <begin position="1" status="less than"/>
        <end position="63"/>
    </location>
</feature>
<feature type="chain" id="PRO_0000037584" description="Mature core protein">
    <location>
        <begin position="1" status="less than"/>
        <end position="49"/>
    </location>
</feature>
<feature type="propeptide" id="PRO_0000037585" description="ER anchor for the core protein, removed in mature form by host signal peptidase">
    <location>
        <begin position="50"/>
        <end position="63"/>
    </location>
</feature>
<feature type="chain" id="PRO_0000037586" description="Envelope glycoprotein E1">
    <location>
        <begin position="64"/>
        <end position="255"/>
    </location>
</feature>
<feature type="chain" id="PRO_0000037587" description="Envelope glycoprotein E2">
    <location>
        <begin position="256"/>
        <end position="309" status="greater than"/>
    </location>
</feature>
<feature type="topological domain" description="Cytoplasmic" evidence="11">
    <location>
        <begin position="1" status="less than"/>
        <end position="40"/>
    </location>
</feature>
<feature type="transmembrane region" description="Helical" evidence="11">
    <location>
        <begin position="41"/>
        <end position="61"/>
    </location>
</feature>
<feature type="topological domain" description="Lumenal" evidence="4">
    <location>
        <begin position="62"/>
        <end position="230"/>
    </location>
</feature>
<feature type="transmembrane region" description="Helical" evidence="4">
    <location>
        <begin position="231"/>
        <end position="251"/>
    </location>
</feature>
<feature type="topological domain" description="Lumenal" evidence="4">
    <location>
        <begin position="252"/>
        <end position="309" status="greater than"/>
    </location>
</feature>
<feature type="region of interest" description="Important for lipid droplets localization" evidence="4">
    <location>
        <begin position="36"/>
        <end position="39"/>
    </location>
</feature>
<feature type="region of interest" description="Important for fusion" evidence="4">
    <location>
        <begin position="137"/>
        <end position="168"/>
    </location>
</feature>
<feature type="region of interest" description="HVR1" evidence="4">
    <location>
        <begin position="256"/>
        <end position="282"/>
    </location>
</feature>
<feature type="site" description="Cleavage; by host signal peptide peptidase" evidence="1">
    <location>
        <begin position="49"/>
        <end position="50"/>
    </location>
</feature>
<feature type="site" description="Cleavage; by host signal peptidase" evidence="1">
    <location>
        <begin position="63"/>
        <end position="64"/>
    </location>
</feature>
<feature type="site" description="Cleavage; by host signal peptidase" evidence="1">
    <location>
        <begin position="255"/>
        <end position="256"/>
    </location>
</feature>
<feature type="glycosylation site" description="N-linked (GlcNAc...) asparagine; by host" evidence="4">
    <location>
        <position position="68"/>
    </location>
</feature>
<feature type="glycosylation site" description="N-linked (GlcNAc...) asparagine; by host" evidence="4">
    <location>
        <position position="81"/>
    </location>
</feature>
<feature type="glycosylation site" description="N-linked (GlcNAc...) asparagine; by host" evidence="4">
    <location>
        <position position="106"/>
    </location>
</feature>
<feature type="glycosylation site" description="N-linked (GlcNAc...) asparagine; by host" evidence="11">
    <location>
        <position position="177"/>
    </location>
</feature>
<feature type="glycosylation site" description="N-linked (GlcNAc...) (high mannose) asparagine; by host" evidence="4">
    <location>
        <position position="289"/>
    </location>
</feature>
<feature type="glycosylation site" description="N-linked (GlcNAc...) (high mannose) asparagine; by host" evidence="4">
    <location>
        <position position="295"/>
    </location>
</feature>
<feature type="glycosylation site" description="N-linked (GlcNAc...) (high mannose) asparagine; by host" evidence="4">
    <location>
        <position position="302"/>
    </location>
</feature>
<feature type="non-terminal residue">
    <location>
        <position position="1"/>
    </location>
</feature>
<feature type="non-terminal residue">
    <location>
        <position position="309"/>
    </location>
</feature>
<keyword id="KW-0053">Apoptosis</keyword>
<keyword id="KW-0167">Capsid protein</keyword>
<keyword id="KW-1165">Clathrin-mediated endocytosis of virus by host</keyword>
<keyword id="KW-1170">Fusion of virus membrane with host endosomal membrane</keyword>
<keyword id="KW-1168">Fusion of virus membrane with host membrane</keyword>
<keyword id="KW-0325">Glycoprotein</keyword>
<keyword id="KW-1035">Host cytoplasm</keyword>
<keyword id="KW-1038">Host endoplasmic reticulum</keyword>
<keyword id="KW-1041">Host lipid droplet</keyword>
<keyword id="KW-1043">Host membrane</keyword>
<keyword id="KW-1045">Host mitochondrion</keyword>
<keyword id="KW-1048">Host nucleus</keyword>
<keyword id="KW-0945">Host-virus interaction</keyword>
<keyword id="KW-1090">Inhibition of host innate immune response by virus</keyword>
<keyword id="KW-0922">Interferon antiviral system evasion</keyword>
<keyword id="KW-0472">Membrane</keyword>
<keyword id="KW-0553">Oncogene</keyword>
<keyword id="KW-0687">Ribonucleoprotein</keyword>
<keyword id="KW-0694">RNA-binding</keyword>
<keyword id="KW-0812">Transmembrane</keyword>
<keyword id="KW-1133">Transmembrane helix</keyword>
<keyword id="KW-0832">Ubl conjugation</keyword>
<keyword id="KW-1161">Viral attachment to host cell</keyword>
<keyword id="KW-0261">Viral envelope protein</keyword>
<keyword id="KW-0899">Viral immunoevasion</keyword>
<keyword id="KW-0543">Viral nucleoprotein</keyword>
<keyword id="KW-1162">Viral penetration into host cytoplasm</keyword>
<keyword id="KW-0946">Virion</keyword>
<keyword id="KW-1164">Virus endocytosis by host</keyword>
<keyword id="KW-1160">Virus entry into host cell</keyword>
<evidence type="ECO:0000250" key="1">
    <source>
        <dbReference type="UniProtKB" id="P26662"/>
    </source>
</evidence>
<evidence type="ECO:0000250" key="2">
    <source>
        <dbReference type="UniProtKB" id="P26663"/>
    </source>
</evidence>
<evidence type="ECO:0000250" key="3">
    <source>
        <dbReference type="UniProtKB" id="P26664"/>
    </source>
</evidence>
<evidence type="ECO:0000250" key="4">
    <source>
        <dbReference type="UniProtKB" id="P27958"/>
    </source>
</evidence>
<evidence type="ECO:0000250" key="5">
    <source>
        <dbReference type="UniProtKB" id="P29846"/>
    </source>
</evidence>
<evidence type="ECO:0000250" key="6">
    <source>
        <dbReference type="UniProtKB" id="Q01403"/>
    </source>
</evidence>
<evidence type="ECO:0000250" key="7">
    <source>
        <dbReference type="UniProtKB" id="Q03463"/>
    </source>
</evidence>
<evidence type="ECO:0000250" key="8">
    <source>
        <dbReference type="UniProtKB" id="Q5EG65"/>
    </source>
</evidence>
<evidence type="ECO:0000250" key="9">
    <source>
        <dbReference type="UniProtKB" id="Q99IB8"/>
    </source>
</evidence>
<evidence type="ECO:0000250" key="10">
    <source>
        <dbReference type="UniProtKB" id="Q9WMX2"/>
    </source>
</evidence>
<evidence type="ECO:0000255" key="11"/>
<evidence type="ECO:0000305" key="12"/>
<organismHost>
    <name type="scientific">Homo sapiens</name>
    <name type="common">Human</name>
    <dbReference type="NCBI Taxonomy" id="9606"/>
</organismHost>
<dbReference type="EMBL" id="X53133">
    <property type="protein sequence ID" value="CAA37293.1"/>
    <property type="molecule type" value="Genomic_RNA"/>
</dbReference>
<dbReference type="BMRB" id="P27955"/>
<dbReference type="SMR" id="P27955"/>
<dbReference type="euHCVdb" id="X53133"/>
<dbReference type="GO" id="GO:0044167">
    <property type="term" value="C:host cell endoplasmic reticulum membrane"/>
    <property type="evidence" value="ECO:0007669"/>
    <property type="project" value="UniProtKB-SubCell"/>
</dbReference>
<dbReference type="GO" id="GO:0044186">
    <property type="term" value="C:host cell lipid droplet"/>
    <property type="evidence" value="ECO:0007669"/>
    <property type="project" value="UniProtKB-SubCell"/>
</dbReference>
<dbReference type="GO" id="GO:0044191">
    <property type="term" value="C:host cell mitochondrial membrane"/>
    <property type="evidence" value="ECO:0007669"/>
    <property type="project" value="UniProtKB-SubCell"/>
</dbReference>
<dbReference type="GO" id="GO:0042025">
    <property type="term" value="C:host cell nucleus"/>
    <property type="evidence" value="ECO:0007669"/>
    <property type="project" value="UniProtKB-SubCell"/>
</dbReference>
<dbReference type="GO" id="GO:0016020">
    <property type="term" value="C:membrane"/>
    <property type="evidence" value="ECO:0007669"/>
    <property type="project" value="UniProtKB-KW"/>
</dbReference>
<dbReference type="GO" id="GO:1990904">
    <property type="term" value="C:ribonucleoprotein complex"/>
    <property type="evidence" value="ECO:0007669"/>
    <property type="project" value="UniProtKB-KW"/>
</dbReference>
<dbReference type="GO" id="GO:0019031">
    <property type="term" value="C:viral envelope"/>
    <property type="evidence" value="ECO:0007669"/>
    <property type="project" value="UniProtKB-KW"/>
</dbReference>
<dbReference type="GO" id="GO:0019013">
    <property type="term" value="C:viral nucleocapsid"/>
    <property type="evidence" value="ECO:0007669"/>
    <property type="project" value="UniProtKB-KW"/>
</dbReference>
<dbReference type="GO" id="GO:0055036">
    <property type="term" value="C:virion membrane"/>
    <property type="evidence" value="ECO:0007669"/>
    <property type="project" value="UniProtKB-SubCell"/>
</dbReference>
<dbReference type="GO" id="GO:0003723">
    <property type="term" value="F:RNA binding"/>
    <property type="evidence" value="ECO:0007669"/>
    <property type="project" value="UniProtKB-KW"/>
</dbReference>
<dbReference type="GO" id="GO:0005198">
    <property type="term" value="F:structural molecule activity"/>
    <property type="evidence" value="ECO:0007669"/>
    <property type="project" value="InterPro"/>
</dbReference>
<dbReference type="GO" id="GO:0075512">
    <property type="term" value="P:clathrin-dependent endocytosis of virus by host cell"/>
    <property type="evidence" value="ECO:0007669"/>
    <property type="project" value="UniProtKB-KW"/>
</dbReference>
<dbReference type="GO" id="GO:0039654">
    <property type="term" value="P:fusion of virus membrane with host endosome membrane"/>
    <property type="evidence" value="ECO:0007669"/>
    <property type="project" value="UniProtKB-KW"/>
</dbReference>
<dbReference type="GO" id="GO:0052170">
    <property type="term" value="P:symbiont-mediated suppression of host innate immune response"/>
    <property type="evidence" value="ECO:0007669"/>
    <property type="project" value="UniProtKB-KW"/>
</dbReference>
<dbReference type="GO" id="GO:0019062">
    <property type="term" value="P:virion attachment to host cell"/>
    <property type="evidence" value="ECO:0007669"/>
    <property type="project" value="UniProtKB-KW"/>
</dbReference>
<dbReference type="FunFam" id="3.30.160.890:FF:000001">
    <property type="entry name" value="Genome polyprotein"/>
    <property type="match status" value="1"/>
</dbReference>
<dbReference type="Gene3D" id="3.30.160.890">
    <property type="entry name" value="Hepatitis C virus envelope glycoprotein E1, chain C"/>
    <property type="match status" value="1"/>
</dbReference>
<dbReference type="InterPro" id="IPR002521">
    <property type="entry name" value="HCV_Core_C"/>
</dbReference>
<dbReference type="InterPro" id="IPR002519">
    <property type="entry name" value="HCV_Env"/>
</dbReference>
<dbReference type="InterPro" id="IPR002531">
    <property type="entry name" value="HCV_NS1"/>
</dbReference>
<dbReference type="Pfam" id="PF01542">
    <property type="entry name" value="HCV_core"/>
    <property type="match status" value="1"/>
</dbReference>
<dbReference type="Pfam" id="PF01539">
    <property type="entry name" value="HCV_env"/>
    <property type="match status" value="1"/>
</dbReference>
<dbReference type="Pfam" id="PF01560">
    <property type="entry name" value="HCV_NS1"/>
    <property type="match status" value="1"/>
</dbReference>
<protein>
    <recommendedName>
        <fullName>Genome polyprotein</fullName>
    </recommendedName>
    <component>
        <recommendedName>
            <fullName>Core protein precursor</fullName>
        </recommendedName>
        <alternativeName>
            <fullName>Capsid protein C</fullName>
        </alternativeName>
        <alternativeName>
            <fullName>p23</fullName>
        </alternativeName>
    </component>
    <component>
        <recommendedName>
            <fullName>Mature core protein</fullName>
        </recommendedName>
        <alternativeName>
            <fullName>p21</fullName>
        </alternativeName>
    </component>
    <component>
        <recommendedName>
            <fullName>Envelope glycoprotein E1</fullName>
        </recommendedName>
        <alternativeName>
            <fullName>gp32</fullName>
        </alternativeName>
        <alternativeName>
            <fullName>gp35</fullName>
        </alternativeName>
    </component>
    <component>
        <recommendedName>
            <fullName>Envelope glycoprotein E2</fullName>
        </recommendedName>
        <alternativeName>
            <fullName>NS1</fullName>
        </alternativeName>
        <alternativeName>
            <fullName>gp68</fullName>
        </alternativeName>
        <alternativeName>
            <fullName>gp70</fullName>
        </alternativeName>
    </component>
</protein>
<reference key="1">
    <citation type="journal article" date="1991" name="Virology">
        <title>Variable and hypervariable domains are found in the regions of HCV corresponding to the flavivirus envelope and NS1 proteins and the pestivirus envelope glycoproteins.</title>
        <authorList>
            <person name="Weiner A.J."/>
            <person name="Brauer M.J."/>
            <person name="Rosenblatt J."/>
            <person name="Richman K.H."/>
            <person name="Tung J."/>
            <person name="Crawford K."/>
            <person name="Bonino F."/>
            <person name="Saracco G."/>
            <person name="Choo Q.-L."/>
            <person name="Houghton M."/>
            <person name="Han J.H."/>
        </authorList>
    </citation>
    <scope>NUCLEOTIDE SEQUENCE [GENOMIC RNA]</scope>
</reference>
<reference key="2">
    <citation type="journal article" date="2000" name="J. Viral Hepat.">
        <title>Properties of the hepatitis C virus core protein: a structural protein that modulates cellular processes.</title>
        <authorList>
            <person name="McLauchlan J."/>
        </authorList>
    </citation>
    <scope>REVIEW</scope>
</reference>
<reference key="3">
    <citation type="journal article" date="2004" name="Hepatology">
        <title>Structural biology of hepatitis C virus.</title>
        <authorList>
            <person name="Penin F."/>
            <person name="Dubuisson J."/>
            <person name="Rey F.A."/>
            <person name="Moradpour D."/>
            <person name="Pawlotsky J.-M."/>
        </authorList>
    </citation>
    <scope>REVIEW</scope>
</reference>
<comment type="function">
    <molecule>Mature core protein</molecule>
    <text evidence="1 3 4 5 9 12">Packages viral RNA to form a viral nucleocapsid, and promotes virion budding (Probable). Participates in the viral particle production as a result of its interaction with the non-structural protein 5A (By similarity). Binds RNA and may function as a RNA chaperone to induce the RNA structural rearrangements taking place during virus replication (By similarity). Modulates viral translation initiation by interacting with viral IRES and 40S ribosomal subunit (By similarity). Affects various cell signaling pathways, host immunity and lipid metabolism (Probable). Prevents the establishment of cellular antiviral state by blocking the interferon-alpha/beta (IFN-alpha/beta) and IFN-gamma signaling pathways and by blocking the formation of phosphorylated STAT1 and promoting ubiquitin-mediated proteasome-dependent degradation of STAT1 (By similarity). Activates STAT3 leading to cellular transformation (By similarity). Regulates the activity of cellular genes, including c-myc and c-fos (By similarity). May repress the promoter of p53, and sequester CREB3 and SP110 isoform 3/Sp110b in the cytoplasm (By similarity). Represses cell cycle negative regulating factor CDKN1A, thereby interrupting an important check point of normal cell cycle regulation (By similarity). Targets transcription factors involved in the regulation of inflammatory responses and in the immune response: suppresses TNF-induced NF-kappa-B activation, and activates AP-1 (By similarity). Binds to dendritic cells (DCs) via C1QR1, resulting in down-regulation of T-lymphocytes proliferation (By similarity). Alters lipid metabolism by interacting with hepatocellular proteins involved in lipid accumulation and storage (By similarity). Induces up-regulation of FAS promoter activity, and thereby contributes to the increased triglyceride accumulation in hepatocytes (steatosis) (By similarity).</text>
</comment>
<comment type="function">
    <molecule>Envelope glycoprotein E1</molecule>
    <text evidence="4">Forms a heterodimer with envelope glycoprotein E2, which mediates virus attachment to the host cell, virion internalization through clathrin-dependent endocytosis and fusion with host membrane (By similarity). Fusion with the host cell is most likely mediated by both E1 and E2, through conformational rearrangements of the heterodimer required for fusion rather than a classical class II fusion mechanism (By similarity). E1/E2 heterodimer binds host apolipoproteins such as APOB and ApoE thereby forming a lipo-viro-particle (LVP) (By similarity). APOE associated to the LVP allows the initial virus attachment to cell surface receptors such as the heparan sulfate proteoglycans (HSPGs), syndecan-1 (SDC1), syndecan-1 (SDC2), the low-density lipoprotein receptor (LDLR) and scavenger receptor class B type I (SCARB1) (By similarity). The cholesterol transfer activity of SCARB1 allows E2 exposure and binding of E2 to SCARB1 and the tetraspanin CD81 (By similarity). E1/E2 heterodimer binding on CD81 activates the epithelial growth factor receptor (EGFR) signaling pathway (By similarity). Diffusion of the complex E1-E2-EGFR-SCARB1-CD81 to the cell lateral membrane allows further interaction with Claudin 1 (CLDN1) and occludin (OCLN) to finally trigger HCV entry (By similarity).</text>
</comment>
<comment type="function">
    <molecule>Envelope glycoprotein E2</molecule>
    <text evidence="3 4">Forms a heterodimer with envelope glycoprotein E1, which mediates virus attachment to the host cell, virion internalization through clathrin-dependent endocytosis and fusion with host membrane (By similarity). Fusion with the host cell is most likely mediated by both E1 and E2, through conformational rearrangements of the heterodimer required for fusion rather than a classical class II fusion mechanism (By similarity). The interaction between envelope glycoprotein E2 and host apolipoprotein E/APOE allows the proper assembly, maturation and infectivity of the viral particles (By similarity). This interaction is probably promoted via the up-regulation of cellular autophagy by the virus (By similarity). E1/E2 heterodimer binds host apolipoproteins such as APOB and APOE thereby forming a lipo-viro-particle (LVP) (By similarity). APOE associated to the LVP allows the initial virus attachment to cell surface receptors such as the heparan sulfate proteoglycans (HSPGs), syndecan-1 (SDC1), syndecan-1 (SDC2), the low-density lipoprotein receptor (LDLR) and scavenger receptor class B type I (SCARB1) (By similarity). The cholesterol transfer activity of SCARB1 allows E2 exposure and binding of E2 to SCARB1 and the tetraspanin CD81 (By similarity). E1/E2 heterodimer binding on CD81 activates the epithelial growth factor receptor (EGFR) signaling pathway (By similarity). Diffusion of the complex E1-E2-EGFR-SCARB1-CD81 to the cell lateral membrane allows further interaction with Claudin 1 (CLDN1) and occludin (OCLN) to finally trigger HCV entry (By similarity). Inhibits host EIF2AK2/PKR activation, preventing the establishment of an antiviral state (By similarity). Viral ligand for CD209/DC-SIGN and CLEC4M/DC-SIGNR, which are respectively found on dendritic cells (DCs), and on liver sinusoidal endothelial cells and macrophage-like cells of lymph node sinuses (By similarity). These interactions allow the capture of circulating HCV particles by these cells and subsequent facilitated transmission to permissive cells such as hepatocytes and lymphocyte subpopulations (By similarity).</text>
</comment>
<comment type="subunit">
    <molecule>Mature core protein</molecule>
    <text evidence="1 3 4 5 7 8 9">Homooligomer (By similarity). Interacts with E1 (via C-terminus) (By similarity). Interacts with the non-structural protein 5A (By similarity). Interacts (via N-terminus) with host STAT1 (via SH2 domain); this interaction results in decreased STAT1 phosphorylation and ubiquitin-mediated proteasome-dependent STAT1 degradation, leading to decreased IFN-stimulated gene transcription (By similarity). Interacts with host STAT3; this interaction constitutively activates STAT3 (By similarity). Interacts with host LTBR receptor (By similarity). Interacts with host TNFRSF1A receptor and possibly induces apoptosis (By similarity). Interacts with host HNRPK (By similarity). Interacts with host YWHAE (By similarity). Interacts with host UBE3A/E6AP (By similarity). Interacts with host DDX3X (By similarity). Interacts with host APOA2 (By similarity). Interacts with host RXRA protein (By similarity). Interacts with host SP110 isoform 3/Sp110b; this interaction sequesters the transcriptional corepressor SP110 away from the nucleus (By similarity). Interacts with host CREB3 nuclear transcription protein; this interaction triggers cell transformation (By similarity). Interacts with host ACY3 (By similarity). Interacts with host C1QR1 (By similarity). Interacts with host RBM24; this interaction, which enhances the interaction of the mature core protein with 5'-UTR, may inhibit viral translation and favor replication (By similarity). Interacts with host EIF2AK2/PKR; this interaction induces the autophosphorylation of EIF2AK2 (By similarity). Part of the viral assembly initiation complex composed of NS2, E1, E2, NS3, NS4A, NS5A and the mature core protein (By similarity).</text>
</comment>
<comment type="subunit">
    <molecule>Envelope glycoprotein E1</molecule>
    <text evidence="4 9">Forms a heterodimer with envelope glycoprotein E2 (By similarity). Interacts with mature core protein (By similarity). Interacts with protease NS2 (By similarity). The heterodimer E1/E2 interacts with host CLDN1; this interaction plays a role in viral entry into host cell (By similarity). Interacts with host SPSB2 (via C-terminus) (By similarity). Part of the viral assembly initiation complex composed of NS2, E1, E2, NS3, NS4A, NS5A and the mature core protein (By similarity).</text>
</comment>
<comment type="subunit">
    <molecule>Envelope glycoprotein E2</molecule>
    <text evidence="4 9">Forms a heterodimer with envelope glycoprotein E1 (By similarity). Interacts with host CD81 and SCARB1 receptors; these interactions play a role in viral entry into host cell (By similarity). Interacts with host EIF2AK2/PKR; this interaction inhibits EIF2AK2 and probably allows the virus to evade the innate immune response (By similarity). Interacts with host CD209/DC-SIGN and CLEC4M/DC-SIGNR (By similarity). Interact with host SPCS1; this interaction is essential for viral particle assembly (By similarity). Interacts with protease NS2 (By similarity). The heterodimer E1/E2 interacts with host CLDN1; this interaction plays a role in viral entry into host cell (By similarity). Part of the viral assembly initiation complex composed of NS2, E1, E2, NS3, NS4A, NS5A and the mature core protein (By similarity).</text>
</comment>
<comment type="subcellular location">
    <molecule>Core protein precursor</molecule>
    <subcellularLocation>
        <location evidence="3">Host endoplasmic reticulum membrane</location>
        <topology evidence="11">Single-pass membrane protein</topology>
    </subcellularLocation>
    <subcellularLocation>
        <location evidence="3">Host mitochondrion membrane</location>
        <topology evidence="11">Single-pass type I membrane protein</topology>
    </subcellularLocation>
    <text>The C-terminal transmembrane domain of the core protein precursor contains an ER signal leading the nascent polyprotein to the ER membrane.</text>
</comment>
<comment type="subcellular location">
    <molecule>Mature core protein</molecule>
    <subcellularLocation>
        <location evidence="9">Virion</location>
    </subcellularLocation>
    <subcellularLocation>
        <location evidence="9">Host cytoplasm</location>
    </subcellularLocation>
    <subcellularLocation>
        <location evidence="1">Host nucleus</location>
    </subcellularLocation>
    <subcellularLocation>
        <location evidence="9">Host lipid droplet</location>
    </subcellularLocation>
    <text evidence="4">Only a minor proportion of core protein is present in the nucleus (By similarity). Probably present on the surface of lipid droplets (By similarity).</text>
</comment>
<comment type="subcellular location">
    <molecule>Envelope glycoprotein E1</molecule>
    <subcellularLocation>
        <location evidence="12">Virion membrane</location>
        <topology evidence="12">Single-pass type I membrane protein</topology>
    </subcellularLocation>
    <subcellularLocation>
        <location>Host endoplasmic reticulum membrane</location>
        <topology evidence="4">Single-pass type I membrane protein</topology>
    </subcellularLocation>
    <text evidence="4">The C-terminal transmembrane domain acts as a signal sequence and forms a hairpin structure before cleavage by host signal peptidase (By similarity). After cleavage, the membrane sequence is retained at the C-terminus of the protein, serving as ER membrane anchor (By similarity). A reorientation of the second hydrophobic stretch occurs after cleavage producing a single reoriented transmembrane domain (By similarity). These events explain the final topology of the protein (By similarity).</text>
</comment>
<comment type="subcellular location">
    <molecule>Envelope glycoprotein E2</molecule>
    <subcellularLocation>
        <location evidence="12">Virion membrane</location>
        <topology evidence="12">Single-pass type I membrane protein</topology>
    </subcellularLocation>
    <subcellularLocation>
        <location>Host endoplasmic reticulum membrane</location>
        <topology evidence="4">Single-pass type I membrane protein</topology>
    </subcellularLocation>
    <subcellularLocation>
        <location evidence="10">Host lipid droplet</location>
    </subcellularLocation>
    <text evidence="4">The C-terminal transmembrane domain acts as a signal sequence and forms a hairpin structure before cleavage by host signal peptidase (By similarity). After cleavage, the membrane sequence is retained at the C-terminus of the protein, serving as ER membrane anchor (By similarity). A reorientation of the second hydrophobic stretch occurs after cleavage producing a single reoriented transmembrane domain (By similarity). These events explain the final topology of the protein (By similarity).</text>
</comment>
<comment type="domain">
    <molecule>Envelope glycoprotein E1</molecule>
    <text evidence="4">The transmembrane regions of envelope E1 and E2 glycoproteins are involved in heterodimer formation, ER localization, and assembly of these proteins.</text>
</comment>
<comment type="domain">
    <molecule>Envelope glycoprotein E2</molecule>
    <text evidence="2 4">The transmembrane regions of envelope E1 and E2 glycoproteins are involved in heterodimer formation, ER localization, and assembly of these proteins (By similarity). Envelope E2 glycoprotein contain two highly variable regions called hypervariable region 1 and 2 (HVR1 and HVR2) (By similarity). E2 also contain two segments involved in CD81-binding (By similarity). HVR1 is implicated in the SCARB1-mediated cell entry and probably acts as a regulator of the association of particles with lipids (By similarity).</text>
</comment>
<comment type="PTM">
    <molecule>Genome polyprotein</molecule>
    <text evidence="3 4">Specific enzymatic cleavages in vivo yield mature proteins (By similarity). The structural proteins, core, E1, E2 and p7 are produced by proteolytic processing by host signal peptidases (By similarity). The core protein precursor is synthesized as a 23 kDa, which is retained in the ER membrane through the hydrophobic signal peptide (By similarity). Cleavage by the signal peptidase releases the 21 kDa mature core protein (By similarity). The cleavage of the core protein precursor occurs between aminoacids 176 and 188 but the exact cleavage site is not known (By similarity). Some degraded forms of the core protein appear as well during the course of infection (By similarity). The other proteins (p7, NS2, NS3, NS4A, NS4B, NS5A and NS5B) are cleaved by the viral proteases (By similarity). Autoprocessing between NS2 and NS3 is mediated by the NS2 cysteine protease catalytic domain and regulated by the NS3 N-terminal domain (By similarity).</text>
</comment>
<comment type="PTM">
    <molecule>Mature core protein</molecule>
    <text evidence="6">Phosphorylated by host PKC and PKA.</text>
</comment>
<comment type="PTM">
    <molecule>Mature core protein</molecule>
    <text evidence="7">Ubiquitinated; mediated by UBE3A and leading to core protein subsequent proteasomal degradation.</text>
</comment>
<comment type="PTM">
    <molecule>Envelope glycoprotein E1</molecule>
    <text evidence="4">Highly N-glycosylated.</text>
</comment>
<comment type="PTM">
    <molecule>Envelope glycoprotein E2</molecule>
    <text evidence="4">Highly N-glycosylated.</text>
</comment>
<comment type="miscellaneous">
    <text evidence="12">Viral particle assembly takes place at the surface of ER-derived membranes in close proximity to lipid droplets. NS2 associates with E1/E2 glycoproteins, NS3 and NS5A, which interacts with the viral RNA and core protein to promote genome encapsidation. The nucleocapsid buds at the ER membrane where E1/E2 glycoproteins are anchored and afterward associate with nascent lipid droplet to acquire APOE and APOC. Secretion of viral particles is probably regulated by viroporin p7.</text>
</comment>
<comment type="miscellaneous">
    <molecule>Mature core protein</molecule>
    <text evidence="1">Exerts viral interference on hepatitis B virus when HCV and HBV coinfect the same cell, by suppressing HBV gene expression, RNA encapsidation and budding.</text>
</comment>
<comment type="similarity">
    <text evidence="12">Belongs to the hepacivirus polyprotein family.</text>
</comment>
<comment type="caution">
    <text evidence="12">The core gene probably also codes for alternative reading frame proteins (ARFPs). Many functions depicted for the core protein might belong to the ARFPs.</text>
</comment>
<sequence>GFADLMGYIPLVGAPLGGAARALAHGVRVLEDGVNYATGNLPGCSFSIFLLALLSCLTVPASAYQVRNSSGIYHVTNDCPNSSIVYETADTILHSPGCVPCVREGNASKCWVPVAPTVATRDGNLPATQLRRHIDLLVGSATLCSALYVGDLCGSVFLVGQLFTFSPRRHWTTQDCNCSIYPGHITGHRMAWDMMMNWSPTAALVMAQLLRIPQAILDMIAGAHWGVLAGIAYFSMVGNWAKVLVVLLLFAGVDATTYTTGGNAARTTQALTSFFSPGAKQDIQLINTNGSWHINRTALNCNASLDTGW</sequence>
<name>POLG_HCVH7</name>
<accession>P27955</accession>
<proteinExistence type="inferred from homology"/>